<name>RL30_LIGS1</name>
<accession>Q1WSA8</accession>
<protein>
    <recommendedName>
        <fullName evidence="1">Large ribosomal subunit protein uL30</fullName>
    </recommendedName>
    <alternativeName>
        <fullName evidence="2">50S ribosomal protein L30</fullName>
    </alternativeName>
</protein>
<proteinExistence type="inferred from homology"/>
<comment type="subunit">
    <text evidence="1">Part of the 50S ribosomal subunit.</text>
</comment>
<comment type="similarity">
    <text evidence="1">Belongs to the universal ribosomal protein uL30 family.</text>
</comment>
<organism>
    <name type="scientific">Ligilactobacillus salivarius (strain UCC118)</name>
    <name type="common">Lactobacillus salivarius</name>
    <dbReference type="NCBI Taxonomy" id="362948"/>
    <lineage>
        <taxon>Bacteria</taxon>
        <taxon>Bacillati</taxon>
        <taxon>Bacillota</taxon>
        <taxon>Bacilli</taxon>
        <taxon>Lactobacillales</taxon>
        <taxon>Lactobacillaceae</taxon>
        <taxon>Ligilactobacillus</taxon>
    </lineage>
</organism>
<reference key="1">
    <citation type="journal article" date="2006" name="Proc. Natl. Acad. Sci. U.S.A.">
        <title>Multireplicon genome architecture of Lactobacillus salivarius.</title>
        <authorList>
            <person name="Claesson M.J."/>
            <person name="Li Y."/>
            <person name="Leahy S."/>
            <person name="Canchaya C."/>
            <person name="van Pijkeren J.P."/>
            <person name="Cerdeno-Tarraga A.M."/>
            <person name="Parkhill J."/>
            <person name="Flynn S."/>
            <person name="O'Sullivan G.C."/>
            <person name="Collins J.K."/>
            <person name="Higgins D."/>
            <person name="Shanahan F."/>
            <person name="Fitzgerald G.F."/>
            <person name="van Sinderen D."/>
            <person name="O'Toole P.W."/>
        </authorList>
    </citation>
    <scope>NUCLEOTIDE SEQUENCE [LARGE SCALE GENOMIC DNA]</scope>
    <source>
        <strain>UCC118</strain>
    </source>
</reference>
<sequence length="60" mass="6561">MDKLKVTLIRSVIGRPQNQRDIVKGLGLGRVNSSVVVPDNAAMRGAIRKINHLVDVELAK</sequence>
<keyword id="KW-1185">Reference proteome</keyword>
<keyword id="KW-0687">Ribonucleoprotein</keyword>
<keyword id="KW-0689">Ribosomal protein</keyword>
<evidence type="ECO:0000255" key="1">
    <source>
        <dbReference type="HAMAP-Rule" id="MF_01371"/>
    </source>
</evidence>
<evidence type="ECO:0000305" key="2"/>
<dbReference type="EMBL" id="CP000233">
    <property type="protein sequence ID" value="ABE00221.1"/>
    <property type="molecule type" value="Genomic_DNA"/>
</dbReference>
<dbReference type="RefSeq" id="WP_003701327.1">
    <property type="nucleotide sequence ID" value="NC_007929.1"/>
</dbReference>
<dbReference type="RefSeq" id="YP_536304.1">
    <property type="nucleotide sequence ID" value="NC_007929.1"/>
</dbReference>
<dbReference type="SMR" id="Q1WSA8"/>
<dbReference type="STRING" id="362948.LSL_1417"/>
<dbReference type="GeneID" id="89466152"/>
<dbReference type="KEGG" id="lsl:LSL_1417"/>
<dbReference type="PATRIC" id="fig|362948.14.peg.1500"/>
<dbReference type="HOGENOM" id="CLU_131047_2_1_9"/>
<dbReference type="OrthoDB" id="9812790at2"/>
<dbReference type="Proteomes" id="UP000006559">
    <property type="component" value="Chromosome"/>
</dbReference>
<dbReference type="GO" id="GO:0022625">
    <property type="term" value="C:cytosolic large ribosomal subunit"/>
    <property type="evidence" value="ECO:0007669"/>
    <property type="project" value="TreeGrafter"/>
</dbReference>
<dbReference type="GO" id="GO:0003735">
    <property type="term" value="F:structural constituent of ribosome"/>
    <property type="evidence" value="ECO:0007669"/>
    <property type="project" value="InterPro"/>
</dbReference>
<dbReference type="GO" id="GO:0006412">
    <property type="term" value="P:translation"/>
    <property type="evidence" value="ECO:0007669"/>
    <property type="project" value="UniProtKB-UniRule"/>
</dbReference>
<dbReference type="CDD" id="cd01658">
    <property type="entry name" value="Ribosomal_L30"/>
    <property type="match status" value="1"/>
</dbReference>
<dbReference type="Gene3D" id="3.30.1390.20">
    <property type="entry name" value="Ribosomal protein L30, ferredoxin-like fold domain"/>
    <property type="match status" value="1"/>
</dbReference>
<dbReference type="HAMAP" id="MF_01371_B">
    <property type="entry name" value="Ribosomal_uL30_B"/>
    <property type="match status" value="1"/>
</dbReference>
<dbReference type="InterPro" id="IPR036919">
    <property type="entry name" value="Ribo_uL30_ferredoxin-like_sf"/>
</dbReference>
<dbReference type="InterPro" id="IPR005996">
    <property type="entry name" value="Ribosomal_uL30_bac-type"/>
</dbReference>
<dbReference type="InterPro" id="IPR016082">
    <property type="entry name" value="Ribosomal_uL30_ferredoxin-like"/>
</dbReference>
<dbReference type="NCBIfam" id="TIGR01308">
    <property type="entry name" value="rpmD_bact"/>
    <property type="match status" value="1"/>
</dbReference>
<dbReference type="PANTHER" id="PTHR15892:SF2">
    <property type="entry name" value="LARGE RIBOSOMAL SUBUNIT PROTEIN UL30M"/>
    <property type="match status" value="1"/>
</dbReference>
<dbReference type="PANTHER" id="PTHR15892">
    <property type="entry name" value="MITOCHONDRIAL RIBOSOMAL PROTEIN L30"/>
    <property type="match status" value="1"/>
</dbReference>
<dbReference type="Pfam" id="PF00327">
    <property type="entry name" value="Ribosomal_L30"/>
    <property type="match status" value="1"/>
</dbReference>
<dbReference type="PIRSF" id="PIRSF002211">
    <property type="entry name" value="Ribosomal_L30_bac-type"/>
    <property type="match status" value="1"/>
</dbReference>
<dbReference type="SUPFAM" id="SSF55129">
    <property type="entry name" value="Ribosomal protein L30p/L7e"/>
    <property type="match status" value="1"/>
</dbReference>
<gene>
    <name evidence="1" type="primary">rpmD</name>
    <name type="ordered locus">LSL_1417</name>
</gene>
<feature type="chain" id="PRO_1000056058" description="Large ribosomal subunit protein uL30">
    <location>
        <begin position="1"/>
        <end position="60"/>
    </location>
</feature>